<name>Y2368_DEIRA</name>
<accession>Q9RRW7</accession>
<feature type="chain" id="PRO_0000166306" description="UPF0126 membrane protein DR_2368">
    <location>
        <begin position="1"/>
        <end position="215"/>
    </location>
</feature>
<feature type="transmembrane region" description="Helical" evidence="1">
    <location>
        <begin position="15"/>
        <end position="35"/>
    </location>
</feature>
<feature type="transmembrane region" description="Helical" evidence="1">
    <location>
        <begin position="39"/>
        <end position="59"/>
    </location>
</feature>
<feature type="transmembrane region" description="Helical" evidence="1">
    <location>
        <begin position="75"/>
        <end position="95"/>
    </location>
</feature>
<feature type="transmembrane region" description="Helical" evidence="1">
    <location>
        <begin position="101"/>
        <end position="121"/>
    </location>
</feature>
<feature type="transmembrane region" description="Helical" evidence="1">
    <location>
        <begin position="123"/>
        <end position="143"/>
    </location>
</feature>
<feature type="transmembrane region" description="Helical" evidence="1">
    <location>
        <begin position="162"/>
        <end position="182"/>
    </location>
</feature>
<keyword id="KW-1003">Cell membrane</keyword>
<keyword id="KW-0472">Membrane</keyword>
<keyword id="KW-1185">Reference proteome</keyword>
<keyword id="KW-0812">Transmembrane</keyword>
<keyword id="KW-1133">Transmembrane helix</keyword>
<organism>
    <name type="scientific">Deinococcus radiodurans (strain ATCC 13939 / DSM 20539 / JCM 16871 / CCUG 27074 / LMG 4051 / NBRC 15346 / NCIMB 9279 / VKM B-1422 / R1)</name>
    <dbReference type="NCBI Taxonomy" id="243230"/>
    <lineage>
        <taxon>Bacteria</taxon>
        <taxon>Thermotogati</taxon>
        <taxon>Deinococcota</taxon>
        <taxon>Deinococci</taxon>
        <taxon>Deinococcales</taxon>
        <taxon>Deinococcaceae</taxon>
        <taxon>Deinococcus</taxon>
    </lineage>
</organism>
<evidence type="ECO:0000255" key="1"/>
<evidence type="ECO:0000305" key="2"/>
<proteinExistence type="inferred from homology"/>
<protein>
    <recommendedName>
        <fullName>UPF0126 membrane protein DR_2368</fullName>
    </recommendedName>
</protein>
<dbReference type="EMBL" id="AE000513">
    <property type="protein sequence ID" value="AAF11915.1"/>
    <property type="molecule type" value="Genomic_DNA"/>
</dbReference>
<dbReference type="PIR" id="H75282">
    <property type="entry name" value="H75282"/>
</dbReference>
<dbReference type="RefSeq" id="NP_296089.1">
    <property type="nucleotide sequence ID" value="NC_001263.1"/>
</dbReference>
<dbReference type="RefSeq" id="WP_010888994.1">
    <property type="nucleotide sequence ID" value="NC_001263.1"/>
</dbReference>
<dbReference type="SMR" id="Q9RRW7"/>
<dbReference type="FunCoup" id="Q9RRW7">
    <property type="interactions" value="121"/>
</dbReference>
<dbReference type="STRING" id="243230.DR_2368"/>
<dbReference type="PaxDb" id="243230-DR_2368"/>
<dbReference type="EnsemblBacteria" id="AAF11915">
    <property type="protein sequence ID" value="AAF11915"/>
    <property type="gene ID" value="DR_2368"/>
</dbReference>
<dbReference type="GeneID" id="69518618"/>
<dbReference type="KEGG" id="dra:DR_2368"/>
<dbReference type="PATRIC" id="fig|243230.17.peg.2603"/>
<dbReference type="eggNOG" id="COG2860">
    <property type="taxonomic scope" value="Bacteria"/>
</dbReference>
<dbReference type="HOGENOM" id="CLU_064906_1_1_0"/>
<dbReference type="InParanoid" id="Q9RRW7"/>
<dbReference type="OrthoDB" id="9791874at2"/>
<dbReference type="Proteomes" id="UP000002524">
    <property type="component" value="Chromosome 1"/>
</dbReference>
<dbReference type="GO" id="GO:0005886">
    <property type="term" value="C:plasma membrane"/>
    <property type="evidence" value="ECO:0000318"/>
    <property type="project" value="GO_Central"/>
</dbReference>
<dbReference type="InterPro" id="IPR005115">
    <property type="entry name" value="Gly_transporter"/>
</dbReference>
<dbReference type="PANTHER" id="PTHR30506">
    <property type="entry name" value="INNER MEMBRANE PROTEIN"/>
    <property type="match status" value="1"/>
</dbReference>
<dbReference type="PANTHER" id="PTHR30506:SF3">
    <property type="entry name" value="UPF0126 INNER MEMBRANE PROTEIN YADS-RELATED"/>
    <property type="match status" value="1"/>
</dbReference>
<dbReference type="Pfam" id="PF03458">
    <property type="entry name" value="Gly_transporter"/>
    <property type="match status" value="2"/>
</dbReference>
<sequence length="215" mass="22928">MNDTLLTTYTLAEGLHWLDLIGVLAFAMSGALLGVRKRFDLFGVLVLGAVTAVGGGAIRDSLTGQTPPLFLRDETYLWTALLGALLAFAFGERLARFERTLSLFDSAGLALFATSGALGAIKIGLGPLGVVFAGMLSGVGGGIIRDLIANEVPEVMYRRDQLYATAAAAGAGAVWLLAPHFTPFQAQAGGALLVLFLRWVSRRQWVRLPVRRLPE</sequence>
<gene>
    <name type="ordered locus">DR_2368</name>
</gene>
<comment type="subcellular location">
    <subcellularLocation>
        <location evidence="2">Cell membrane</location>
        <topology evidence="2">Multi-pass membrane protein</topology>
    </subcellularLocation>
</comment>
<comment type="similarity">
    <text evidence="2">Belongs to the UPF0126 family.</text>
</comment>
<reference key="1">
    <citation type="journal article" date="1999" name="Science">
        <title>Genome sequence of the radioresistant bacterium Deinococcus radiodurans R1.</title>
        <authorList>
            <person name="White O."/>
            <person name="Eisen J.A."/>
            <person name="Heidelberg J.F."/>
            <person name="Hickey E.K."/>
            <person name="Peterson J.D."/>
            <person name="Dodson R.J."/>
            <person name="Haft D.H."/>
            <person name="Gwinn M.L."/>
            <person name="Nelson W.C."/>
            <person name="Richardson D.L."/>
            <person name="Moffat K.S."/>
            <person name="Qin H."/>
            <person name="Jiang L."/>
            <person name="Pamphile W."/>
            <person name="Crosby M."/>
            <person name="Shen M."/>
            <person name="Vamathevan J.J."/>
            <person name="Lam P."/>
            <person name="McDonald L.A."/>
            <person name="Utterback T.R."/>
            <person name="Zalewski C."/>
            <person name="Makarova K.S."/>
            <person name="Aravind L."/>
            <person name="Daly M.J."/>
            <person name="Minton K.W."/>
            <person name="Fleischmann R.D."/>
            <person name="Ketchum K.A."/>
            <person name="Nelson K.E."/>
            <person name="Salzberg S.L."/>
            <person name="Smith H.O."/>
            <person name="Venter J.C."/>
            <person name="Fraser C.M."/>
        </authorList>
    </citation>
    <scope>NUCLEOTIDE SEQUENCE [LARGE SCALE GENOMIC DNA]</scope>
    <source>
        <strain>ATCC 13939 / DSM 20539 / JCM 16871 / CCUG 27074 / LMG 4051 / NBRC 15346 / NCIMB 9279 / VKM B-1422 / R1</strain>
    </source>
</reference>